<feature type="chain" id="PRO_0000050905" description="Cell division cycle protein cdt2">
    <location>
        <begin position="1"/>
        <end position="490"/>
    </location>
</feature>
<feature type="repeat" description="WD 1">
    <location>
        <begin position="178"/>
        <end position="208"/>
    </location>
</feature>
<feature type="repeat" description="WD 2">
    <location>
        <begin position="226"/>
        <end position="257"/>
    </location>
</feature>
<feature type="repeat" description="WD 3">
    <location>
        <begin position="285"/>
        <end position="317"/>
    </location>
</feature>
<feature type="repeat" description="WD 4">
    <location>
        <begin position="339"/>
        <end position="369"/>
    </location>
</feature>
<feature type="repeat" description="WD 5">
    <location>
        <begin position="387"/>
        <end position="419"/>
    </location>
</feature>
<feature type="repeat" description="WD 6">
    <location>
        <begin position="435"/>
        <end position="464"/>
    </location>
</feature>
<feature type="region of interest" description="Disordered" evidence="1">
    <location>
        <begin position="18"/>
        <end position="40"/>
    </location>
</feature>
<name>CDT2_SCHPO</name>
<keyword id="KW-0131">Cell cycle</keyword>
<keyword id="KW-0132">Cell division</keyword>
<keyword id="KW-0469">Meiosis</keyword>
<keyword id="KW-0498">Mitosis</keyword>
<keyword id="KW-0539">Nucleus</keyword>
<keyword id="KW-1185">Reference proteome</keyword>
<keyword id="KW-0677">Repeat</keyword>
<keyword id="KW-0833">Ubl conjugation pathway</keyword>
<keyword id="KW-0853">WD repeat</keyword>
<sequence length="490" mass="54294">MNMDIGKALSDVGGLRDITSRANNSLPPTPDSSPAAPSKKHKLYDFLESRGKIETPRKRIVFEKKPLLHKPVHIQKKPAQLCKELLIRQLGGSRSHPFSTKTSRHVGGRLNLETYYSRPSECLMMLNQLPFCLGFANNESLLAVCTETGALELFDSRFYDRQNEENQPSARRIHGWLAHNNAIFSVNFSKDDSLLATSSGDQTSKVFDLSTQQCITRLGRRGVDGYHSHSVKQVNFCNDSPYNLVSCSRDGSIIFWDMRTHGITIDGEHFQKPVLRIRKAHENSGRDCSITSATWLPQSTSQVISSCSANSALKLWDLRTVHTVRPLPAATTPELTTSKRDFGVTNVCTSPDGERIYAASRDSIIYEYSSRHLNSGFCKTYKDPRLRISSFYVKLACSPDGATLACGGGVQDKTSGVVVFDTTRNCSSSAMLTGGHTKDVTAVDWSSEGQLASISDDGSVRVWNSSLHGSAANLREKNFSEIFYWGFSEK</sequence>
<dbReference type="EMBL" id="L75944">
    <property type="protein sequence ID" value="AAA85478.1"/>
    <property type="molecule type" value="mRNA"/>
</dbReference>
<dbReference type="EMBL" id="CU329670">
    <property type="protein sequence ID" value="CAB11228.1"/>
    <property type="molecule type" value="Genomic_DNA"/>
</dbReference>
<dbReference type="PIR" id="T37884">
    <property type="entry name" value="T37884"/>
</dbReference>
<dbReference type="RefSeq" id="NP_593588.1">
    <property type="nucleotide sequence ID" value="NM_001019020.2"/>
</dbReference>
<dbReference type="SMR" id="Q10990"/>
<dbReference type="BioGRID" id="278838">
    <property type="interactions" value="258"/>
</dbReference>
<dbReference type="FunCoup" id="Q10990">
    <property type="interactions" value="317"/>
</dbReference>
<dbReference type="IntAct" id="Q10990">
    <property type="interactions" value="10"/>
</dbReference>
<dbReference type="STRING" id="284812.Q10990"/>
<dbReference type="iPTMnet" id="Q10990"/>
<dbReference type="PaxDb" id="4896-SPAC17H9.19c.1"/>
<dbReference type="EnsemblFungi" id="SPAC17H9.19c.1">
    <property type="protein sequence ID" value="SPAC17H9.19c.1:pep"/>
    <property type="gene ID" value="SPAC17H9.19c"/>
</dbReference>
<dbReference type="GeneID" id="2542374"/>
<dbReference type="KEGG" id="spo:2542374"/>
<dbReference type="PomBase" id="SPAC17H9.19c">
    <property type="gene designation" value="cdt2"/>
</dbReference>
<dbReference type="VEuPathDB" id="FungiDB:SPAC17H9.19c"/>
<dbReference type="eggNOG" id="KOG0321">
    <property type="taxonomic scope" value="Eukaryota"/>
</dbReference>
<dbReference type="HOGENOM" id="CLU_555698_0_0_1"/>
<dbReference type="InParanoid" id="Q10990"/>
<dbReference type="OMA" id="DSRVHTY"/>
<dbReference type="PhylomeDB" id="Q10990"/>
<dbReference type="Reactome" id="R-SPO-110314">
    <property type="pathway name" value="Recognition of DNA damage by PCNA-containing replication complex"/>
</dbReference>
<dbReference type="Reactome" id="R-SPO-8951664">
    <property type="pathway name" value="Neddylation"/>
</dbReference>
<dbReference type="UniPathway" id="UPA00143"/>
<dbReference type="PRO" id="PR:Q10990"/>
<dbReference type="Proteomes" id="UP000002485">
    <property type="component" value="Chromosome I"/>
</dbReference>
<dbReference type="GO" id="GO:0080008">
    <property type="term" value="C:Cul4-RING E3 ubiquitin ligase complex"/>
    <property type="evidence" value="ECO:0000314"/>
    <property type="project" value="PomBase"/>
</dbReference>
<dbReference type="GO" id="GO:0005634">
    <property type="term" value="C:nucleus"/>
    <property type="evidence" value="ECO:0000314"/>
    <property type="project" value="PomBase"/>
</dbReference>
<dbReference type="GO" id="GO:0044877">
    <property type="term" value="F:protein-containing complex binding"/>
    <property type="evidence" value="ECO:0000314"/>
    <property type="project" value="PomBase"/>
</dbReference>
<dbReference type="GO" id="GO:0030674">
    <property type="term" value="F:protein-macromolecule adaptor activity"/>
    <property type="evidence" value="ECO:0000353"/>
    <property type="project" value="PomBase"/>
</dbReference>
<dbReference type="GO" id="GO:0051301">
    <property type="term" value="P:cell division"/>
    <property type="evidence" value="ECO:0007669"/>
    <property type="project" value="UniProtKB-KW"/>
</dbReference>
<dbReference type="GO" id="GO:0051321">
    <property type="term" value="P:meiotic cell cycle"/>
    <property type="evidence" value="ECO:0007669"/>
    <property type="project" value="UniProtKB-KW"/>
</dbReference>
<dbReference type="GO" id="GO:0043161">
    <property type="term" value="P:proteasome-mediated ubiquitin-dependent protein catabolic process"/>
    <property type="evidence" value="ECO:0000318"/>
    <property type="project" value="GO_Central"/>
</dbReference>
<dbReference type="GO" id="GO:0016567">
    <property type="term" value="P:protein ubiquitination"/>
    <property type="evidence" value="ECO:0007669"/>
    <property type="project" value="UniProtKB-UniPathway"/>
</dbReference>
<dbReference type="GO" id="GO:2000779">
    <property type="term" value="P:regulation of double-strand break repair"/>
    <property type="evidence" value="ECO:0000315"/>
    <property type="project" value="PomBase"/>
</dbReference>
<dbReference type="GO" id="GO:0006511">
    <property type="term" value="P:ubiquitin-dependent protein catabolic process"/>
    <property type="evidence" value="ECO:0000315"/>
    <property type="project" value="PomBase"/>
</dbReference>
<dbReference type="Gene3D" id="2.130.10.10">
    <property type="entry name" value="YVTN repeat-like/Quinoprotein amine dehydrogenase"/>
    <property type="match status" value="2"/>
</dbReference>
<dbReference type="InterPro" id="IPR020472">
    <property type="entry name" value="G-protein_beta_WD-40_rep"/>
</dbReference>
<dbReference type="InterPro" id="IPR051865">
    <property type="entry name" value="WD-repeat_CDT2_adapter"/>
</dbReference>
<dbReference type="InterPro" id="IPR015943">
    <property type="entry name" value="WD40/YVTN_repeat-like_dom_sf"/>
</dbReference>
<dbReference type="InterPro" id="IPR019775">
    <property type="entry name" value="WD40_repeat_CS"/>
</dbReference>
<dbReference type="InterPro" id="IPR036322">
    <property type="entry name" value="WD40_repeat_dom_sf"/>
</dbReference>
<dbReference type="InterPro" id="IPR001680">
    <property type="entry name" value="WD40_rpt"/>
</dbReference>
<dbReference type="PANTHER" id="PTHR22852:SF0">
    <property type="entry name" value="DENTICLELESS PROTEIN HOMOLOG"/>
    <property type="match status" value="1"/>
</dbReference>
<dbReference type="PANTHER" id="PTHR22852">
    <property type="entry name" value="LETHAL 2 DENTICLELESS PROTEIN RETINOIC ACID-REGULATED NUCLEAR MATRIX-ASSOCIATED PROTEIN"/>
    <property type="match status" value="1"/>
</dbReference>
<dbReference type="Pfam" id="PF00400">
    <property type="entry name" value="WD40"/>
    <property type="match status" value="4"/>
</dbReference>
<dbReference type="PRINTS" id="PR00320">
    <property type="entry name" value="GPROTEINBRPT"/>
</dbReference>
<dbReference type="SMART" id="SM00320">
    <property type="entry name" value="WD40"/>
    <property type="match status" value="6"/>
</dbReference>
<dbReference type="SUPFAM" id="SSF50978">
    <property type="entry name" value="WD40 repeat-like"/>
    <property type="match status" value="1"/>
</dbReference>
<dbReference type="PROSITE" id="PS00678">
    <property type="entry name" value="WD_REPEATS_1"/>
    <property type="match status" value="3"/>
</dbReference>
<dbReference type="PROSITE" id="PS50082">
    <property type="entry name" value="WD_REPEATS_2"/>
    <property type="match status" value="3"/>
</dbReference>
<dbReference type="PROSITE" id="PS50294">
    <property type="entry name" value="WD_REPEATS_REGION"/>
    <property type="match status" value="2"/>
</dbReference>
<proteinExistence type="evidence at protein level"/>
<organism>
    <name type="scientific">Schizosaccharomyces pombe (strain 972 / ATCC 24843)</name>
    <name type="common">Fission yeast</name>
    <dbReference type="NCBI Taxonomy" id="284812"/>
    <lineage>
        <taxon>Eukaryota</taxon>
        <taxon>Fungi</taxon>
        <taxon>Dikarya</taxon>
        <taxon>Ascomycota</taxon>
        <taxon>Taphrinomycotina</taxon>
        <taxon>Schizosaccharomycetes</taxon>
        <taxon>Schizosaccharomycetales</taxon>
        <taxon>Schizosaccharomycetaceae</taxon>
        <taxon>Schizosaccharomyces</taxon>
    </lineage>
</organism>
<accession>Q10990</accession>
<gene>
    <name type="primary">cdt2</name>
    <name type="ORF">SPAC17H9.19c</name>
</gene>
<reference key="1">
    <citation type="submission" date="1996-01" db="EMBL/GenBank/DDBJ databases">
        <title>cdt2 is a novel target of the Cdc10 transcription factor: coupling START with cytokinesis.</title>
        <authorList>
            <person name="Hofmann J.F.X."/>
            <person name="Beach D."/>
        </authorList>
    </citation>
    <scope>NUCLEOTIDE SEQUENCE [MRNA]</scope>
</reference>
<reference key="2">
    <citation type="journal article" date="2003" name="Genetics">
        <title>The Schizosaccharomyces pombe cdt2(+) gene, a target of G1-S phase-specific transcription factor complex DSC1, is required for mitotic and premeiotic DNA replication.</title>
        <authorList>
            <person name="Yoshida S.-H."/>
            <person name="Al-Amodi H."/>
            <person name="Nakamura T."/>
            <person name="McInerny C.J."/>
            <person name="Shimoda C."/>
        </authorList>
    </citation>
    <scope>NUCLEOTIDE SEQUENCE</scope>
    <scope>FUNCTION</scope>
    <scope>SUBCELLULAR LOCATION</scope>
</reference>
<reference key="3">
    <citation type="journal article" date="2002" name="Nature">
        <title>The genome sequence of Schizosaccharomyces pombe.</title>
        <authorList>
            <person name="Wood V."/>
            <person name="Gwilliam R."/>
            <person name="Rajandream M.A."/>
            <person name="Lyne M.H."/>
            <person name="Lyne R."/>
            <person name="Stewart A."/>
            <person name="Sgouros J.G."/>
            <person name="Peat N."/>
            <person name="Hayles J."/>
            <person name="Baker S.G."/>
            <person name="Basham D."/>
            <person name="Bowman S."/>
            <person name="Brooks K."/>
            <person name="Brown D."/>
            <person name="Brown S."/>
            <person name="Chillingworth T."/>
            <person name="Churcher C.M."/>
            <person name="Collins M."/>
            <person name="Connor R."/>
            <person name="Cronin A."/>
            <person name="Davis P."/>
            <person name="Feltwell T."/>
            <person name="Fraser A."/>
            <person name="Gentles S."/>
            <person name="Goble A."/>
            <person name="Hamlin N."/>
            <person name="Harris D.E."/>
            <person name="Hidalgo J."/>
            <person name="Hodgson G."/>
            <person name="Holroyd S."/>
            <person name="Hornsby T."/>
            <person name="Howarth S."/>
            <person name="Huckle E.J."/>
            <person name="Hunt S."/>
            <person name="Jagels K."/>
            <person name="James K.D."/>
            <person name="Jones L."/>
            <person name="Jones M."/>
            <person name="Leather S."/>
            <person name="McDonald S."/>
            <person name="McLean J."/>
            <person name="Mooney P."/>
            <person name="Moule S."/>
            <person name="Mungall K.L."/>
            <person name="Murphy L.D."/>
            <person name="Niblett D."/>
            <person name="Odell C."/>
            <person name="Oliver K."/>
            <person name="O'Neil S."/>
            <person name="Pearson D."/>
            <person name="Quail M.A."/>
            <person name="Rabbinowitsch E."/>
            <person name="Rutherford K.M."/>
            <person name="Rutter S."/>
            <person name="Saunders D."/>
            <person name="Seeger K."/>
            <person name="Sharp S."/>
            <person name="Skelton J."/>
            <person name="Simmonds M.N."/>
            <person name="Squares R."/>
            <person name="Squares S."/>
            <person name="Stevens K."/>
            <person name="Taylor K."/>
            <person name="Taylor R.G."/>
            <person name="Tivey A."/>
            <person name="Walsh S.V."/>
            <person name="Warren T."/>
            <person name="Whitehead S."/>
            <person name="Woodward J.R."/>
            <person name="Volckaert G."/>
            <person name="Aert R."/>
            <person name="Robben J."/>
            <person name="Grymonprez B."/>
            <person name="Weltjens I."/>
            <person name="Vanstreels E."/>
            <person name="Rieger M."/>
            <person name="Schaefer M."/>
            <person name="Mueller-Auer S."/>
            <person name="Gabel C."/>
            <person name="Fuchs M."/>
            <person name="Duesterhoeft A."/>
            <person name="Fritzc C."/>
            <person name="Holzer E."/>
            <person name="Moestl D."/>
            <person name="Hilbert H."/>
            <person name="Borzym K."/>
            <person name="Langer I."/>
            <person name="Beck A."/>
            <person name="Lehrach H."/>
            <person name="Reinhardt R."/>
            <person name="Pohl T.M."/>
            <person name="Eger P."/>
            <person name="Zimmermann W."/>
            <person name="Wedler H."/>
            <person name="Wambutt R."/>
            <person name="Purnelle B."/>
            <person name="Goffeau A."/>
            <person name="Cadieu E."/>
            <person name="Dreano S."/>
            <person name="Gloux S."/>
            <person name="Lelaure V."/>
            <person name="Mottier S."/>
            <person name="Galibert F."/>
            <person name="Aves S.J."/>
            <person name="Xiang Z."/>
            <person name="Hunt C."/>
            <person name="Moore K."/>
            <person name="Hurst S.M."/>
            <person name="Lucas M."/>
            <person name="Rochet M."/>
            <person name="Gaillardin C."/>
            <person name="Tallada V.A."/>
            <person name="Garzon A."/>
            <person name="Thode G."/>
            <person name="Daga R.R."/>
            <person name="Cruzado L."/>
            <person name="Jimenez J."/>
            <person name="Sanchez M."/>
            <person name="del Rey F."/>
            <person name="Benito J."/>
            <person name="Dominguez A."/>
            <person name="Revuelta J.L."/>
            <person name="Moreno S."/>
            <person name="Armstrong J."/>
            <person name="Forsburg S.L."/>
            <person name="Cerutti L."/>
            <person name="Lowe T."/>
            <person name="McCombie W.R."/>
            <person name="Paulsen I."/>
            <person name="Potashkin J."/>
            <person name="Shpakovski G.V."/>
            <person name="Ussery D."/>
            <person name="Barrell B.G."/>
            <person name="Nurse P."/>
        </authorList>
    </citation>
    <scope>NUCLEOTIDE SEQUENCE [LARGE SCALE GENOMIC DNA]</scope>
    <source>
        <strain>972 / ATCC 24843</strain>
    </source>
</reference>
<reference key="4">
    <citation type="journal article" date="2005" name="EMBO J.">
        <title>Transactivation of Schizosaccharomyces pombe cdt2+ stimulates a Pcu4-Ddb1-CSN ubiquitin ligase.</title>
        <authorList>
            <person name="Liu C."/>
            <person name="Poitelea M."/>
            <person name="Watson A."/>
            <person name="Yoshida S.H."/>
            <person name="Shimoda C."/>
            <person name="Holmberg C."/>
            <person name="Nielsen O."/>
            <person name="Carr A.M."/>
        </authorList>
    </citation>
    <scope>FUNCTION</scope>
</reference>
<reference key="5">
    <citation type="journal article" date="2006" name="EMBO Rep.">
        <title>DNA damage induces Cdt1 proteolysis in fission yeast through a pathway dependent on Cdt2 and Ddb1.</title>
        <authorList>
            <person name="Ralph E."/>
            <person name="Boye E."/>
            <person name="Kearsey S.E."/>
        </authorList>
    </citation>
    <scope>FUNCTION</scope>
</reference>
<comment type="function">
    <text evidence="2 3 4">Substrate-specific adapter of a DCX (DDB1-CUL4-X-box) E3 ubiquitin-protein ligase complex required for DNA replication during mitosis and meiosis. The DCX(DTL) complex, also named CRL4(CDT2) complex, mediates the polyubiquitination and subsequent degradation of cdt1 and spd1. Involved in the regulation of mitotic and pre-meiotic S-phase progression.</text>
</comment>
<comment type="pathway">
    <text>Protein modification; protein ubiquitination.</text>
</comment>
<comment type="subunit">
    <text>Component of the DCX(DTL) E3 ubiquitin ligase complex, at least composed of cul4, ddb1, cdt2 and pip1.</text>
</comment>
<comment type="interaction">
    <interactant intactId="EBI-3505190">
        <id>Q10990</id>
    </interactant>
    <interactant intactId="EBI-3647868">
        <id>O94308</id>
        <label>csn1</label>
    </interactant>
    <organismsDiffer>false</organismsDiffer>
    <experiments>2</experiments>
</comment>
<comment type="interaction">
    <interactant intactId="EBI-3505190">
        <id>Q10990</id>
    </interactant>
    <interactant intactId="EBI-3647902">
        <id>O13807</id>
        <label>ddb1</label>
    </interactant>
    <organismsDiffer>false</organismsDiffer>
    <experiments>4</experiments>
</comment>
<comment type="interaction">
    <interactant intactId="EBI-3505190">
        <id>Q10990</id>
    </interactant>
    <interactant intactId="EBI-3505187">
        <id>O94603</id>
        <label>jhd1</label>
    </interactant>
    <organismsDiffer>false</organismsDiffer>
    <experiments>2</experiments>
</comment>
<comment type="subcellular location">
    <subcellularLocation>
        <location evidence="2">Nucleus</location>
    </subcellularLocation>
</comment>
<comment type="similarity">
    <text evidence="5">Belongs to the WD repeat cdt2 family.</text>
</comment>
<protein>
    <recommendedName>
        <fullName>Cell division cycle protein cdt2</fullName>
    </recommendedName>
</protein>
<evidence type="ECO:0000256" key="1">
    <source>
        <dbReference type="SAM" id="MobiDB-lite"/>
    </source>
</evidence>
<evidence type="ECO:0000269" key="2">
    <source>
    </source>
</evidence>
<evidence type="ECO:0000269" key="3">
    <source>
    </source>
</evidence>
<evidence type="ECO:0000269" key="4">
    <source>
    </source>
</evidence>
<evidence type="ECO:0000305" key="5"/>